<gene>
    <name evidence="8" type="primary">TRAV38-2DV8</name>
</gene>
<organism>
    <name type="scientific">Homo sapiens</name>
    <name type="common">Human</name>
    <dbReference type="NCBI Taxonomy" id="9606"/>
    <lineage>
        <taxon>Eukaryota</taxon>
        <taxon>Metazoa</taxon>
        <taxon>Chordata</taxon>
        <taxon>Craniata</taxon>
        <taxon>Vertebrata</taxon>
        <taxon>Euteleostomi</taxon>
        <taxon>Mammalia</taxon>
        <taxon>Eutheria</taxon>
        <taxon>Euarchontoglires</taxon>
        <taxon>Primates</taxon>
        <taxon>Haplorrhini</taxon>
        <taxon>Catarrhini</taxon>
        <taxon>Hominidae</taxon>
        <taxon>Homo</taxon>
    </lineage>
</organism>
<reference key="1">
    <citation type="journal article" date="1997" name="Genome Res.">
        <title>Analysis of the 1.1-Mb human alpha/delta T-cell receptor locus with bacterial artificial chromosome clones.</title>
        <authorList>
            <person name="Boysen C."/>
            <person name="Simon M.I."/>
            <person name="Hood L."/>
        </authorList>
    </citation>
    <scope>NUCLEOTIDE SEQUENCE [GENOMIC DNA] (IMGT ALLELE TRAV38-2/DV8*01)</scope>
</reference>
<reference key="2">
    <citation type="journal article" date="2003" name="Nature">
        <title>The DNA sequence and analysis of human chromosome 14.</title>
        <authorList>
            <person name="Heilig R."/>
            <person name="Eckenberg R."/>
            <person name="Petit J.-L."/>
            <person name="Fonknechten N."/>
            <person name="Da Silva C."/>
            <person name="Cattolico L."/>
            <person name="Levy M."/>
            <person name="Barbe V."/>
            <person name="De Berardinis V."/>
            <person name="Ureta-Vidal A."/>
            <person name="Pelletier E."/>
            <person name="Vico V."/>
            <person name="Anthouard V."/>
            <person name="Rowen L."/>
            <person name="Madan A."/>
            <person name="Qin S."/>
            <person name="Sun H."/>
            <person name="Du H."/>
            <person name="Pepin K."/>
            <person name="Artiguenave F."/>
            <person name="Robert C."/>
            <person name="Cruaud C."/>
            <person name="Bruels T."/>
            <person name="Jaillon O."/>
            <person name="Friedlander L."/>
            <person name="Samson G."/>
            <person name="Brottier P."/>
            <person name="Cure S."/>
            <person name="Segurens B."/>
            <person name="Aniere F."/>
            <person name="Samain S."/>
            <person name="Crespeau H."/>
            <person name="Abbasi N."/>
            <person name="Aiach N."/>
            <person name="Boscus D."/>
            <person name="Dickhoff R."/>
            <person name="Dors M."/>
            <person name="Dubois I."/>
            <person name="Friedman C."/>
            <person name="Gouyvenoux M."/>
            <person name="James R."/>
            <person name="Madan A."/>
            <person name="Mairey-Estrada B."/>
            <person name="Mangenot S."/>
            <person name="Martins N."/>
            <person name="Menard M."/>
            <person name="Oztas S."/>
            <person name="Ratcliffe A."/>
            <person name="Shaffer T."/>
            <person name="Trask B."/>
            <person name="Vacherie B."/>
            <person name="Bellemere C."/>
            <person name="Belser C."/>
            <person name="Besnard-Gonnet M."/>
            <person name="Bartol-Mavel D."/>
            <person name="Boutard M."/>
            <person name="Briez-Silla S."/>
            <person name="Combette S."/>
            <person name="Dufosse-Laurent V."/>
            <person name="Ferron C."/>
            <person name="Lechaplais C."/>
            <person name="Louesse C."/>
            <person name="Muselet D."/>
            <person name="Magdelenat G."/>
            <person name="Pateau E."/>
            <person name="Petit E."/>
            <person name="Sirvain-Trukniewicz P."/>
            <person name="Trybou A."/>
            <person name="Vega-Czarny N."/>
            <person name="Bataille E."/>
            <person name="Bluet E."/>
            <person name="Bordelais I."/>
            <person name="Dubois M."/>
            <person name="Dumont C."/>
            <person name="Guerin T."/>
            <person name="Haffray S."/>
            <person name="Hammadi R."/>
            <person name="Muanga J."/>
            <person name="Pellouin V."/>
            <person name="Robert D."/>
            <person name="Wunderle E."/>
            <person name="Gauguet G."/>
            <person name="Roy A."/>
            <person name="Sainte-Marthe L."/>
            <person name="Verdier J."/>
            <person name="Verdier-Discala C."/>
            <person name="Hillier L.W."/>
            <person name="Fulton L."/>
            <person name="McPherson J."/>
            <person name="Matsuda F."/>
            <person name="Wilson R."/>
            <person name="Scarpelli C."/>
            <person name="Gyapay G."/>
            <person name="Wincker P."/>
            <person name="Saurin W."/>
            <person name="Quetier F."/>
            <person name="Waterston R."/>
            <person name="Hood L."/>
            <person name="Weissenbach J."/>
        </authorList>
    </citation>
    <scope>NUCLEOTIDE SEQUENCE [LARGE SCALE GENOMIC DNA] (IMGT ALLELE TRAV38-2/DV8*01)</scope>
</reference>
<reference key="3">
    <citation type="book" date="2001" name="The T Cell Receptor FactsBook.">
        <title>The T Cell Receptor FactsBook.</title>
        <editorList>
            <person name="Lefranc M.P."/>
            <person name="Lefranc G."/>
        </editorList>
        <authorList>
            <person name="Lefranc M.P."/>
            <person name="Lefranc G."/>
        </authorList>
    </citation>
    <scope>NOMENCLATURE</scope>
</reference>
<reference key="4">
    <citation type="journal article" date="2004" name="Nat. Rev. Immunol.">
        <title>The many important facets of T-cell repertoire diversity.</title>
        <authorList>
            <person name="Nikolich-Zugich J."/>
            <person name="Slifka M.K."/>
            <person name="Messaoudi I."/>
        </authorList>
    </citation>
    <scope>REVIEW ON T CELL REPERTOIRE DIVERSITY</scope>
</reference>
<reference key="5">
    <citation type="journal article" date="2010" name="Cold Spring Harb. Perspect. Biol.">
        <title>Structural biology of the T-cell receptor: insights into receptor assembly, ligand recognition, and initiation of signaling.</title>
        <authorList>
            <person name="Wucherpfennig K.W."/>
            <person name="Gagnon E."/>
            <person name="Call M.J."/>
            <person name="Huseby E.S."/>
            <person name="Call M.E."/>
        </authorList>
    </citation>
    <scope>REVIEW ON T CELL RECEPTOR-CD3 COMPLEX ASSEMBLY</scope>
    <scope>SUBCELLULAR LOCATION</scope>
</reference>
<reference key="6">
    <citation type="journal article" date="2013" name="Nat. Rev. Immunol.">
        <title>T cell receptor signalling networks: branched, diversified and bounded.</title>
        <authorList>
            <person name="Brownlie R.J."/>
            <person name="Zamoyska R."/>
        </authorList>
    </citation>
    <scope>REVIEW ON T CELL RECEPTOR SIGNALING</scope>
</reference>
<reference key="7">
    <citation type="journal article" date="2014" name="Front. Immunol.">
        <title>Immunoglobulin and T Cell Receptor Genes: IMGT((R)) and the Birth and Rise of Immunoinformatics.</title>
        <authorList>
            <person name="Lefranc M.P."/>
        </authorList>
    </citation>
    <scope>NOMENCLATURE</scope>
</reference>
<reference key="8">
    <citation type="journal article" date="2015" name="Annu. Rev. Immunol.">
        <title>T cell antigen receptor recognition of antigen-presenting molecules.</title>
        <authorList>
            <person name="Rossjohn J."/>
            <person name="Gras S."/>
            <person name="Miles J.J."/>
            <person name="Turner S.J."/>
            <person name="Godfrey D.I."/>
            <person name="McCluskey J."/>
        </authorList>
    </citation>
    <scope>REVIEW ON FUNCTION</scope>
</reference>
<keyword id="KW-1064">Adaptive immunity</keyword>
<keyword id="KW-1003">Cell membrane</keyword>
<keyword id="KW-1015">Disulfide bond</keyword>
<keyword id="KW-0325">Glycoprotein</keyword>
<keyword id="KW-0391">Immunity</keyword>
<keyword id="KW-0393">Immunoglobulin domain</keyword>
<keyword id="KW-0472">Membrane</keyword>
<keyword id="KW-0675">Receptor</keyword>
<keyword id="KW-1185">Reference proteome</keyword>
<keyword id="KW-0732">Signal</keyword>
<keyword id="KW-1279">T cell receptor</keyword>
<name>TV382_HUMAN</name>
<protein>
    <recommendedName>
        <fullName evidence="8">T cell receptor alpha variable 38-2/delta variable 8</fullName>
    </recommendedName>
</protein>
<feature type="signal peptide" evidence="1">
    <location>
        <begin position="1"/>
        <end position="21"/>
    </location>
</feature>
<feature type="chain" id="PRO_5011933782" description="T cell receptor alpha variable 38-2/delta variable 8" evidence="1">
    <location>
        <begin position="22"/>
        <end position="116"/>
    </location>
</feature>
<feature type="domain" description="Ig-like" evidence="2">
    <location>
        <begin position="22"/>
        <end position="116" status="greater than"/>
    </location>
</feature>
<feature type="glycosylation site" description="N-linked (GlcNAc...) asparagine" evidence="1">
    <location>
        <position position="78"/>
    </location>
</feature>
<feature type="disulfide bond" evidence="2">
    <location>
        <begin position="43"/>
        <end position="112"/>
    </location>
</feature>
<feature type="non-terminal residue">
    <location>
        <position position="116"/>
    </location>
</feature>
<proteinExistence type="inferred from homology"/>
<dbReference type="EMBL" id="AC245470">
    <property type="status" value="NOT_ANNOTATED_CDS"/>
    <property type="molecule type" value="Genomic_DNA"/>
</dbReference>
<dbReference type="EMBL" id="AE000521">
    <property type="protein sequence ID" value="AAB69036.1"/>
    <property type="molecule type" value="Genomic_DNA"/>
</dbReference>
<dbReference type="SMR" id="A0JD32"/>
<dbReference type="FunCoup" id="A0JD32">
    <property type="interactions" value="343"/>
</dbReference>
<dbReference type="IMGT_GENE-DB" id="TRAV38-2DV8"/>
<dbReference type="GlyCosmos" id="A0JD32">
    <property type="glycosylation" value="1 site, No reported glycans"/>
</dbReference>
<dbReference type="GlyGen" id="A0JD32">
    <property type="glycosylation" value="1 site"/>
</dbReference>
<dbReference type="BioMuta" id="TRAV38-2DV8"/>
<dbReference type="MassIVE" id="A0JD32"/>
<dbReference type="Ensembl" id="ENST00000390465.2">
    <property type="protein sequence ID" value="ENSP00000452332.1"/>
    <property type="gene ID" value="ENSG00000211817.2"/>
</dbReference>
<dbReference type="UCSC" id="uc032aua.2">
    <property type="organism name" value="human"/>
</dbReference>
<dbReference type="AGR" id="HGNC:12138"/>
<dbReference type="GeneCards" id="TRAV38-2DV8"/>
<dbReference type="HGNC" id="HGNC:12138">
    <property type="gene designation" value="TRAV38-2DV8"/>
</dbReference>
<dbReference type="HPA" id="ENSG00000211817">
    <property type="expression patterns" value="Tissue enriched (lymphoid)"/>
</dbReference>
<dbReference type="neXtProt" id="NX_A0JD32"/>
<dbReference type="VEuPathDB" id="HostDB:ENSG00000211817"/>
<dbReference type="GeneTree" id="ENSGT00940000160147"/>
<dbReference type="HOGENOM" id="CLU_077975_8_1_1"/>
<dbReference type="InParanoid" id="A0JD32"/>
<dbReference type="OMA" id="TVILHCT"/>
<dbReference type="OrthoDB" id="8947657at2759"/>
<dbReference type="PAN-GO" id="A0JD32">
    <property type="GO annotations" value="3 GO annotations based on evolutionary models"/>
</dbReference>
<dbReference type="PhylomeDB" id="A0JD32"/>
<dbReference type="ChiTaRS" id="TRAV38-2DV8">
    <property type="organism name" value="human"/>
</dbReference>
<dbReference type="Pharos" id="A0JD32">
    <property type="development level" value="Tdark"/>
</dbReference>
<dbReference type="PRO" id="PR:A0JD32"/>
<dbReference type="Proteomes" id="UP000005640">
    <property type="component" value="Chromosome 14"/>
</dbReference>
<dbReference type="RNAct" id="A0JD32">
    <property type="molecule type" value="protein"/>
</dbReference>
<dbReference type="Bgee" id="ENSG00000211817">
    <property type="expression patterns" value="Expressed in lymph node and 81 other cell types or tissues"/>
</dbReference>
<dbReference type="GO" id="GO:0019814">
    <property type="term" value="C:immunoglobulin complex"/>
    <property type="evidence" value="ECO:0000318"/>
    <property type="project" value="GO_Central"/>
</dbReference>
<dbReference type="GO" id="GO:0042101">
    <property type="term" value="C:T cell receptor complex"/>
    <property type="evidence" value="ECO:0007669"/>
    <property type="project" value="UniProtKB-KW"/>
</dbReference>
<dbReference type="GO" id="GO:0002250">
    <property type="term" value="P:adaptive immune response"/>
    <property type="evidence" value="ECO:0007669"/>
    <property type="project" value="UniProtKB-KW"/>
</dbReference>
<dbReference type="GO" id="GO:0006955">
    <property type="term" value="P:immune response"/>
    <property type="evidence" value="ECO:0000318"/>
    <property type="project" value="GO_Central"/>
</dbReference>
<dbReference type="FunFam" id="2.60.40.10:FF:000878">
    <property type="entry name" value="T cell receptor alpha variable 38-1"/>
    <property type="match status" value="1"/>
</dbReference>
<dbReference type="Gene3D" id="2.60.40.10">
    <property type="entry name" value="Immunoglobulins"/>
    <property type="match status" value="1"/>
</dbReference>
<dbReference type="InterPro" id="IPR007110">
    <property type="entry name" value="Ig-like_dom"/>
</dbReference>
<dbReference type="InterPro" id="IPR036179">
    <property type="entry name" value="Ig-like_dom_sf"/>
</dbReference>
<dbReference type="InterPro" id="IPR013783">
    <property type="entry name" value="Ig-like_fold"/>
</dbReference>
<dbReference type="InterPro" id="IPR013106">
    <property type="entry name" value="Ig_V-set"/>
</dbReference>
<dbReference type="InterPro" id="IPR051287">
    <property type="entry name" value="TCR_variable_region"/>
</dbReference>
<dbReference type="PANTHER" id="PTHR19367:SF47">
    <property type="entry name" value="IG-LIKE DOMAIN-CONTAINING PROTEIN"/>
    <property type="match status" value="1"/>
</dbReference>
<dbReference type="PANTHER" id="PTHR19367">
    <property type="entry name" value="T-CELL RECEPTOR ALPHA CHAIN V REGION"/>
    <property type="match status" value="1"/>
</dbReference>
<dbReference type="Pfam" id="PF07686">
    <property type="entry name" value="V-set"/>
    <property type="match status" value="1"/>
</dbReference>
<dbReference type="SMART" id="SM00406">
    <property type="entry name" value="IGv"/>
    <property type="match status" value="1"/>
</dbReference>
<dbReference type="SUPFAM" id="SSF48726">
    <property type="entry name" value="Immunoglobulin"/>
    <property type="match status" value="1"/>
</dbReference>
<dbReference type="PROSITE" id="PS50835">
    <property type="entry name" value="IG_LIKE"/>
    <property type="match status" value="1"/>
</dbReference>
<evidence type="ECO:0000255" key="1"/>
<evidence type="ECO:0000255" key="2">
    <source>
        <dbReference type="PROSITE-ProRule" id="PRU00114"/>
    </source>
</evidence>
<evidence type="ECO:0000303" key="3">
    <source>
    </source>
</evidence>
<evidence type="ECO:0000303" key="4">
    <source>
    </source>
</evidence>
<evidence type="ECO:0000303" key="5">
    <source>
    </source>
</evidence>
<evidence type="ECO:0000303" key="6">
    <source>
    </source>
</evidence>
<evidence type="ECO:0000303" key="7">
    <source>
    </source>
</evidence>
<evidence type="ECO:0000303" key="8">
    <source ref="3"/>
</evidence>
<evidence type="ECO:0000305" key="9"/>
<accession>A0JD32</accession>
<comment type="function">
    <text evidence="3 5 6 7">V region of the variable domain of T cell receptor (TR) alpha chain that participates in the antigen recognition (PubMed:24600447). Alpha-beta T cell receptors are antigen specific receptors which are essential to the immune response and are present on the cell surface of T lymphocytes. Recognize peptide-major histocompatibility (MH) (pMH) complexes that are displayed by antigen presenting cells (APC), a prerequisite for efficient T cell adaptive immunity against pathogens (PubMed:25493333). Binding of alpha-beta TR to pMH complex initiates TR-CD3 clustering on the cell surface and intracellular activation of LCK that phosphorylates the ITAM motifs of CD3G, CD3D, CD3E and CD247 enabling the recruitment of ZAP70. In turn ZAP70 phosphorylates LAT, which recruits numerous signaling molecules to form the LAT signalosome. The LAT signalosome propagates signal branching to three major signaling pathways, the calcium, the mitogen-activated protein kinase (MAPK) kinase and the nuclear factor NF-kappa-B (NF-kB) pathways, leading to the mobilization of transcription factors that are critical for gene expression and essential for T cell growth and differentiation (PubMed:23524462). The T cell repertoire is generated in the thymus, by V-(D)-J rearrangement. This repertoire is then shaped by intrathymic selection events to generate a peripheral T cell pool of self-MH restricted, non-autoaggressive T cells. Post-thymic interaction of alpha-beta TR with the pMH complexes shapes TR structural and functional avidity (PubMed:15040585).</text>
</comment>
<comment type="subunit">
    <text evidence="4">Alpha-beta TR is a heterodimer composed of an alpha and beta chain; disulfide-linked. The alpha-beta TR is associated with the transmembrane signaling CD3 coreceptor proteins to form the TR-CD3 (TcR or TCR). The assembly of alpha-beta TR heterodimers with CD3 occurs in the endoplasmic reticulum where a single alpha-beta TR heterodimer associates with one CD3D-CD3E heterodimer, one CD3G-CD3E heterodimer and one CD247 homodimer forming a stable octameric structure. CD3D-CD3E and CD3G-CD3E heterodimers preferentially associate with TR alpha and TR beta chains, respectively. The association of the CD247 homodimer is the last step of TcR assembly in the endoplasmic reticulum and is required for transport to the cell surface.</text>
</comment>
<comment type="subcellular location">
    <subcellularLocation>
        <location evidence="4">Cell membrane</location>
    </subcellularLocation>
</comment>
<comment type="polymorphism">
    <text evidence="9">There are several alleles. The sequence shown is that of IMGT allele TRAV38-2/DV8*01.</text>
</comment>
<sequence>MACPGFLWALVISTCLEFSMAQTVTQSQPEMSVQEAETVTLSCTYDTSESDYYLFWYKQPPSRQMILVIRQEAYKQQNATENRFSVNFQKAAKSFSLKISDSQLGDAAMYFCAYRS</sequence>